<comment type="subcellular location">
    <subcellularLocation>
        <location evidence="2">Cell membrane</location>
        <topology evidence="2">Multi-pass membrane protein</topology>
    </subcellularLocation>
</comment>
<comment type="similarity">
    <text evidence="2">Belongs to the tellurite-resistance/dicarboxylate transporter (TDT) family.</text>
</comment>
<dbReference type="EMBL" id="L77117">
    <property type="protein sequence ID" value="AAB98753.1"/>
    <property type="molecule type" value="Genomic_DNA"/>
</dbReference>
<dbReference type="PIR" id="B64395">
    <property type="entry name" value="B64395"/>
</dbReference>
<dbReference type="RefSeq" id="WP_010870267.1">
    <property type="nucleotide sequence ID" value="NC_000909.1"/>
</dbReference>
<dbReference type="SMR" id="Q58172"/>
<dbReference type="FunCoup" id="Q58172">
    <property type="interactions" value="1"/>
</dbReference>
<dbReference type="STRING" id="243232.MJ_0762"/>
<dbReference type="TCDB" id="2.A.16.4.4">
    <property type="family name" value="the telurite-resistance/dicarboxylate transporter (tdt) family"/>
</dbReference>
<dbReference type="PaxDb" id="243232-MJ_0762"/>
<dbReference type="EnsemblBacteria" id="AAB98753">
    <property type="protein sequence ID" value="AAB98753"/>
    <property type="gene ID" value="MJ_0762"/>
</dbReference>
<dbReference type="GeneID" id="1451639"/>
<dbReference type="KEGG" id="mja:MJ_0762"/>
<dbReference type="eggNOG" id="arCOG04355">
    <property type="taxonomic scope" value="Archaea"/>
</dbReference>
<dbReference type="HOGENOM" id="CLU_030057_6_4_2"/>
<dbReference type="InParanoid" id="Q58172"/>
<dbReference type="OrthoDB" id="184482at2157"/>
<dbReference type="PhylomeDB" id="Q58172"/>
<dbReference type="Proteomes" id="UP000000805">
    <property type="component" value="Chromosome"/>
</dbReference>
<dbReference type="GO" id="GO:0005886">
    <property type="term" value="C:plasma membrane"/>
    <property type="evidence" value="ECO:0000318"/>
    <property type="project" value="GO_Central"/>
</dbReference>
<dbReference type="GO" id="GO:0000319">
    <property type="term" value="F:sulfite transmembrane transporter activity"/>
    <property type="evidence" value="ECO:0000318"/>
    <property type="project" value="GO_Central"/>
</dbReference>
<dbReference type="GO" id="GO:0000316">
    <property type="term" value="P:sulfite transmembrane transport"/>
    <property type="evidence" value="ECO:0000318"/>
    <property type="project" value="GO_Central"/>
</dbReference>
<dbReference type="CDD" id="cd09321">
    <property type="entry name" value="TDT_like_3"/>
    <property type="match status" value="1"/>
</dbReference>
<dbReference type="FunFam" id="1.50.10.150:FF:000004">
    <property type="entry name" value="Malic acid transporter"/>
    <property type="match status" value="1"/>
</dbReference>
<dbReference type="Gene3D" id="1.50.10.150">
    <property type="entry name" value="Voltage-dependent anion channel"/>
    <property type="match status" value="1"/>
</dbReference>
<dbReference type="InterPro" id="IPR004695">
    <property type="entry name" value="SLAC1/Mae1/Ssu1/TehA"/>
</dbReference>
<dbReference type="InterPro" id="IPR051629">
    <property type="entry name" value="Sulfite_efflux_TDT"/>
</dbReference>
<dbReference type="InterPro" id="IPR011552">
    <property type="entry name" value="TehA/Mae1"/>
</dbReference>
<dbReference type="InterPro" id="IPR038665">
    <property type="entry name" value="Voltage-dep_anion_channel_sf"/>
</dbReference>
<dbReference type="NCBIfam" id="TIGR00816">
    <property type="entry name" value="tdt"/>
    <property type="match status" value="1"/>
</dbReference>
<dbReference type="PANTHER" id="PTHR31686">
    <property type="match status" value="1"/>
</dbReference>
<dbReference type="PANTHER" id="PTHR31686:SF1">
    <property type="entry name" value="SULFITE EFFLUX PUMP SSU1"/>
    <property type="match status" value="1"/>
</dbReference>
<dbReference type="Pfam" id="PF03595">
    <property type="entry name" value="SLAC1"/>
    <property type="match status" value="1"/>
</dbReference>
<reference key="1">
    <citation type="journal article" date="1996" name="Science">
        <title>Complete genome sequence of the methanogenic archaeon, Methanococcus jannaschii.</title>
        <authorList>
            <person name="Bult C.J."/>
            <person name="White O."/>
            <person name="Olsen G.J."/>
            <person name="Zhou L."/>
            <person name="Fleischmann R.D."/>
            <person name="Sutton G.G."/>
            <person name="Blake J.A."/>
            <person name="FitzGerald L.M."/>
            <person name="Clayton R.A."/>
            <person name="Gocayne J.D."/>
            <person name="Kerlavage A.R."/>
            <person name="Dougherty B.A."/>
            <person name="Tomb J.-F."/>
            <person name="Adams M.D."/>
            <person name="Reich C.I."/>
            <person name="Overbeek R."/>
            <person name="Kirkness E.F."/>
            <person name="Weinstock K.G."/>
            <person name="Merrick J.M."/>
            <person name="Glodek A."/>
            <person name="Scott J.L."/>
            <person name="Geoghagen N.S.M."/>
            <person name="Weidman J.F."/>
            <person name="Fuhrmann J.L."/>
            <person name="Nguyen D."/>
            <person name="Utterback T.R."/>
            <person name="Kelley J.M."/>
            <person name="Peterson J.D."/>
            <person name="Sadow P.W."/>
            <person name="Hanna M.C."/>
            <person name="Cotton M.D."/>
            <person name="Roberts K.M."/>
            <person name="Hurst M.A."/>
            <person name="Kaine B.P."/>
            <person name="Borodovsky M."/>
            <person name="Klenk H.-P."/>
            <person name="Fraser C.M."/>
            <person name="Smith H.O."/>
            <person name="Woese C.R."/>
            <person name="Venter J.C."/>
        </authorList>
    </citation>
    <scope>NUCLEOTIDE SEQUENCE [LARGE SCALE GENOMIC DNA]</scope>
    <source>
        <strain>ATCC 43067 / DSM 2661 / JAL-1 / JCM 10045 / NBRC 100440</strain>
    </source>
</reference>
<name>Y762_METJA</name>
<gene>
    <name type="ordered locus">MJ0762</name>
</gene>
<organism>
    <name type="scientific">Methanocaldococcus jannaschii (strain ATCC 43067 / DSM 2661 / JAL-1 / JCM 10045 / NBRC 100440)</name>
    <name type="common">Methanococcus jannaschii</name>
    <dbReference type="NCBI Taxonomy" id="243232"/>
    <lineage>
        <taxon>Archaea</taxon>
        <taxon>Methanobacteriati</taxon>
        <taxon>Methanobacteriota</taxon>
        <taxon>Methanomada group</taxon>
        <taxon>Methanococci</taxon>
        <taxon>Methanococcales</taxon>
        <taxon>Methanocaldococcaceae</taxon>
        <taxon>Methanocaldococcus</taxon>
    </lineage>
</organism>
<evidence type="ECO:0000255" key="1"/>
<evidence type="ECO:0000305" key="2"/>
<sequence>MQSYIKNFESSWFAAVMGTGVLAVTSLFYSEYLPILKDISFLLFYFNILLFFVFLMLWILRWVKYPKNMIAELKHPVLSSFSPTVAVAMLVLGIDFILIKNNLFLGKIFWVFGAIGMFLFSLIVPFYMFKSESIKLDHVNPGWYIPPVGLIVIPIAGSLIMPHLTGVWHELTVLINYFGWGAGFFLYLALLAVVIYRFILHHPLPSAMAPTVWINLGPIGAGIVALINMVNNSPFITIKEPFYIFSFIFWGFGLWWSLMAIIMTLYYVKKLKLPYAMSWWAFIFPLGVYIASTHLVYKIFGFEIVDYIGFGLYWLLFFFWIVTLIKTINKVYSGELFKDKIN</sequence>
<accession>Q58172</accession>
<keyword id="KW-1003">Cell membrane</keyword>
<keyword id="KW-0472">Membrane</keyword>
<keyword id="KW-1185">Reference proteome</keyword>
<keyword id="KW-0812">Transmembrane</keyword>
<keyword id="KW-1133">Transmembrane helix</keyword>
<keyword id="KW-0813">Transport</keyword>
<protein>
    <recommendedName>
        <fullName>Uncharacterized transporter MJ0762</fullName>
    </recommendedName>
</protein>
<feature type="chain" id="PRO_0000107020" description="Uncharacterized transporter MJ0762">
    <location>
        <begin position="1"/>
        <end position="342"/>
    </location>
</feature>
<feature type="transmembrane region" description="Helical" evidence="1">
    <location>
        <begin position="8"/>
        <end position="28"/>
    </location>
</feature>
<feature type="transmembrane region" description="Helical" evidence="1">
    <location>
        <begin position="39"/>
        <end position="59"/>
    </location>
</feature>
<feature type="transmembrane region" description="Helical" evidence="1">
    <location>
        <begin position="79"/>
        <end position="99"/>
    </location>
</feature>
<feature type="transmembrane region" description="Helical" evidence="1">
    <location>
        <begin position="108"/>
        <end position="128"/>
    </location>
</feature>
<feature type="transmembrane region" description="Helical" evidence="1">
    <location>
        <begin position="142"/>
        <end position="162"/>
    </location>
</feature>
<feature type="transmembrane region" description="Helical" evidence="1">
    <location>
        <begin position="175"/>
        <end position="195"/>
    </location>
</feature>
<feature type="transmembrane region" description="Helical" evidence="1">
    <location>
        <begin position="207"/>
        <end position="227"/>
    </location>
</feature>
<feature type="transmembrane region" description="Helical" evidence="1">
    <location>
        <begin position="242"/>
        <end position="262"/>
    </location>
</feature>
<feature type="transmembrane region" description="Helical" evidence="1">
    <location>
        <begin position="276"/>
        <end position="296"/>
    </location>
</feature>
<feature type="transmembrane region" description="Helical" evidence="1">
    <location>
        <begin position="304"/>
        <end position="324"/>
    </location>
</feature>
<proteinExistence type="inferred from homology"/>